<accession>P92564</accession>
<accession>Q1ZXV4</accession>
<protein>
    <recommendedName>
        <fullName>Uncharacterized mitochondrial protein AtMg01350</fullName>
    </recommendedName>
    <alternativeName>
        <fullName>ORF145c</fullName>
    </alternativeName>
</protein>
<name>M1350_ARATH</name>
<reference key="1">
    <citation type="journal article" date="1997" name="Nat. Genet.">
        <title>The mitochondrial genome of Arabidopsis thaliana contains 57 genes in 366,924 nucleotides.</title>
        <authorList>
            <person name="Unseld M."/>
            <person name="Marienfeld J.R."/>
            <person name="Brandt P."/>
            <person name="Brennicke A."/>
        </authorList>
    </citation>
    <scope>NUCLEOTIDE SEQUENCE [LARGE SCALE GENOMIC DNA]</scope>
    <source>
        <strain>cv. C24</strain>
    </source>
</reference>
<reference key="2">
    <citation type="journal article" date="2018" name="Plant Cell">
        <title>Correction of persistent errors in Arabidopsis reference mitochondrial genomes.</title>
        <authorList>
            <person name="Sloan D.B."/>
            <person name="Wu Z."/>
            <person name="Sharbrough J."/>
        </authorList>
    </citation>
    <scope>NUCLEOTIDE SEQUENCE [LARGE SCALE GENOMIC DNA]</scope>
    <source>
        <strain>cv. Columbia</strain>
    </source>
</reference>
<evidence type="ECO:0000255" key="1"/>
<evidence type="ECO:0000305" key="2"/>
<keyword id="KW-0472">Membrane</keyword>
<keyword id="KW-0496">Mitochondrion</keyword>
<keyword id="KW-1185">Reference proteome</keyword>
<keyword id="KW-0812">Transmembrane</keyword>
<keyword id="KW-1133">Transmembrane helix</keyword>
<gene>
    <name type="ordered locus">AtMg01350</name>
</gene>
<proteinExistence type="predicted"/>
<sequence>MTKREYNSQPEMKEEVLAYLLQLSASLVLPVAIWLIAAGQIFTCLRGYTISNYQEKVEEKLCSTLVDKISEKLADLFPVYGITPSRNAPFPTILEQLLATVSQEERLAYLSNMYNSLIEMGIDSPCFYPIVQTFLFLMGGGGGPA</sequence>
<comment type="subcellular location">
    <subcellularLocation>
        <location evidence="2">Mitochondrion membrane</location>
        <topology evidence="2">Single-pass membrane protein</topology>
    </subcellularLocation>
</comment>
<organism>
    <name type="scientific">Arabidopsis thaliana</name>
    <name type="common">Mouse-ear cress</name>
    <dbReference type="NCBI Taxonomy" id="3702"/>
    <lineage>
        <taxon>Eukaryota</taxon>
        <taxon>Viridiplantae</taxon>
        <taxon>Streptophyta</taxon>
        <taxon>Embryophyta</taxon>
        <taxon>Tracheophyta</taxon>
        <taxon>Spermatophyta</taxon>
        <taxon>Magnoliopsida</taxon>
        <taxon>eudicotyledons</taxon>
        <taxon>Gunneridae</taxon>
        <taxon>Pentapetalae</taxon>
        <taxon>rosids</taxon>
        <taxon>malvids</taxon>
        <taxon>Brassicales</taxon>
        <taxon>Brassicaceae</taxon>
        <taxon>Camelineae</taxon>
        <taxon>Arabidopsis</taxon>
    </lineage>
</organism>
<feature type="chain" id="PRO_0000196828" description="Uncharacterized mitochondrial protein AtMg01350">
    <location>
        <begin position="1"/>
        <end position="145"/>
    </location>
</feature>
<feature type="transmembrane region" description="Helical" evidence="1">
    <location>
        <begin position="16"/>
        <end position="36"/>
    </location>
</feature>
<geneLocation type="mitochondrion"/>
<dbReference type="EMBL" id="Y08501">
    <property type="protein sequence ID" value="CAA69784.1"/>
    <property type="molecule type" value="Genomic_DNA"/>
</dbReference>
<dbReference type="EMBL" id="BK010421">
    <property type="status" value="NOT_ANNOTATED_CDS"/>
    <property type="molecule type" value="Genomic_DNA"/>
</dbReference>
<dbReference type="RefSeq" id="NP_085586.1">
    <property type="nucleotide sequence ID" value="NC_001284.2"/>
</dbReference>
<dbReference type="SMR" id="P92564"/>
<dbReference type="STRING" id="3702.P92564"/>
<dbReference type="PaxDb" id="3702-ATMG01350.1"/>
<dbReference type="EnsemblPlants" id="ATMG01350.1">
    <property type="protein sequence ID" value="ATMG01350.1"/>
    <property type="gene ID" value="ATMG01350"/>
</dbReference>
<dbReference type="Gramene" id="ATMG01350.1">
    <property type="protein sequence ID" value="ATMG01350.1"/>
    <property type="gene ID" value="ATMG01350"/>
</dbReference>
<dbReference type="Araport" id="ATMG01350"/>
<dbReference type="TAIR" id="ATMG01350">
    <property type="gene designation" value="ORF145C"/>
</dbReference>
<dbReference type="HOGENOM" id="CLU_1789509_0_0_1"/>
<dbReference type="InParanoid" id="P92564"/>
<dbReference type="PRO" id="PR:P92564"/>
<dbReference type="Proteomes" id="UP000006548">
    <property type="component" value="Mitochondrion MT"/>
</dbReference>
<dbReference type="GO" id="GO:0031966">
    <property type="term" value="C:mitochondrial membrane"/>
    <property type="evidence" value="ECO:0007669"/>
    <property type="project" value="UniProtKB-SubCell"/>
</dbReference>